<protein>
    <recommendedName>
        <fullName evidence="5">Formate-nitrite transporter</fullName>
        <shortName evidence="4">PmFNT</shortName>
    </recommendedName>
    <alternativeName>
        <fullName evidence="4">FNT-type lactate transporter</fullName>
    </alternativeName>
</protein>
<reference evidence="9" key="1">
    <citation type="submission" date="2016-06" db="EMBL/GenBank/DDBJ databases">
        <authorList>
            <consortium name="Pathogen Informatics"/>
        </authorList>
    </citation>
    <scope>NUCLEOTIDE SEQUENCE [LARGE SCALE GENOMIC DNA]</scope>
    <source>
        <strain evidence="6">PmlGA01</strain>
    </source>
</reference>
<reference evidence="5" key="2">
    <citation type="journal article" date="2021" name="ChemMedChem">
        <title>Pentafluoro-3-hydroxy-pent-2-en-1-ones Potently Inhibit FNT-Type Lactate Transporters from all Five Human-Pathogenic Plasmodium Species.</title>
        <authorList>
            <person name="Walloch P."/>
            <person name="Hansen C."/>
            <person name="Priegann T."/>
            <person name="Schade D."/>
            <person name="Beitz E."/>
        </authorList>
    </citation>
    <scope>FUNCTION</scope>
    <scope>TRANSPORTER ACTIVITY</scope>
    <scope>ACTIVITY REGULATION</scope>
</reference>
<proteinExistence type="inferred from homology"/>
<organism evidence="8">
    <name type="scientific">Plasmodium malariae</name>
    <dbReference type="NCBI Taxonomy" id="5858"/>
    <lineage>
        <taxon>Eukaryota</taxon>
        <taxon>Sar</taxon>
        <taxon>Alveolata</taxon>
        <taxon>Apicomplexa</taxon>
        <taxon>Aconoidasida</taxon>
        <taxon>Haemosporida</taxon>
        <taxon>Plasmodiidae</taxon>
        <taxon>Plasmodium</taxon>
        <taxon>Plasmodium (Plasmodium)</taxon>
    </lineage>
</organism>
<dbReference type="EMBL" id="LT594496">
    <property type="protein sequence ID" value="SBT79311.1"/>
    <property type="molecule type" value="Genomic_DNA"/>
</dbReference>
<dbReference type="EMBL" id="LT594629">
    <property type="protein sequence ID" value="SCN12270.1"/>
    <property type="molecule type" value="Genomic_DNA"/>
</dbReference>
<dbReference type="RefSeq" id="XP_028861241.1">
    <property type="nucleotide sequence ID" value="XM_029004564.1"/>
</dbReference>
<dbReference type="SMR" id="A0A1C3KYI2"/>
<dbReference type="GeneID" id="39868377"/>
<dbReference type="VEuPathDB" id="PlasmoDB:PmUG01_08039500"/>
<dbReference type="OMA" id="SIRPLVM"/>
<dbReference type="OrthoDB" id="4829at2759"/>
<dbReference type="Proteomes" id="UP000219799">
    <property type="component" value="Chromosome 8"/>
</dbReference>
<dbReference type="Proteomes" id="UP000219813">
    <property type="component" value="Chromosome 8"/>
</dbReference>
<dbReference type="GO" id="GO:0005886">
    <property type="term" value="C:plasma membrane"/>
    <property type="evidence" value="ECO:0007669"/>
    <property type="project" value="UniProtKB-SubCell"/>
</dbReference>
<dbReference type="GO" id="GO:0005774">
    <property type="term" value="C:vacuolar membrane"/>
    <property type="evidence" value="ECO:0007669"/>
    <property type="project" value="UniProtKB-SubCell"/>
</dbReference>
<dbReference type="GO" id="GO:0015513">
    <property type="term" value="F:high-affinity secondary active nitrite transmembrane transporter activity"/>
    <property type="evidence" value="ECO:0007669"/>
    <property type="project" value="TreeGrafter"/>
</dbReference>
<dbReference type="GO" id="GO:0015707">
    <property type="term" value="P:nitrite transport"/>
    <property type="evidence" value="ECO:0007669"/>
    <property type="project" value="TreeGrafter"/>
</dbReference>
<dbReference type="Gene3D" id="1.20.1080.10">
    <property type="entry name" value="Glycerol uptake facilitator protein"/>
    <property type="match status" value="1"/>
</dbReference>
<dbReference type="InterPro" id="IPR023271">
    <property type="entry name" value="Aquaporin-like"/>
</dbReference>
<dbReference type="InterPro" id="IPR000292">
    <property type="entry name" value="For/NO2_transpt"/>
</dbReference>
<dbReference type="InterPro" id="IPR024002">
    <property type="entry name" value="For/NO2_transpt_CS"/>
</dbReference>
<dbReference type="PANTHER" id="PTHR30520">
    <property type="entry name" value="FORMATE TRANSPORTER-RELATED"/>
    <property type="match status" value="1"/>
</dbReference>
<dbReference type="PANTHER" id="PTHR30520:SF6">
    <property type="entry name" value="FORMATE_NITRATE FAMILY TRANSPORTER (EUROFUNG)"/>
    <property type="match status" value="1"/>
</dbReference>
<dbReference type="Pfam" id="PF01226">
    <property type="entry name" value="Form_Nir_trans"/>
    <property type="match status" value="1"/>
</dbReference>
<dbReference type="PROSITE" id="PS01006">
    <property type="entry name" value="FORMATE_NITRITE_TP_2"/>
    <property type="match status" value="1"/>
</dbReference>
<name>FNT_PLAMA</name>
<evidence type="ECO:0000250" key="1">
    <source>
        <dbReference type="UniProtKB" id="O77389"/>
    </source>
</evidence>
<evidence type="ECO:0000255" key="2"/>
<evidence type="ECO:0000269" key="3">
    <source>
    </source>
</evidence>
<evidence type="ECO:0000303" key="4">
    <source>
    </source>
</evidence>
<evidence type="ECO:0000305" key="5"/>
<evidence type="ECO:0000312" key="6">
    <source>
        <dbReference type="EMBL" id="SBT79311.1"/>
    </source>
</evidence>
<evidence type="ECO:0000312" key="7">
    <source>
        <dbReference type="EMBL" id="SCN12270.1"/>
    </source>
</evidence>
<evidence type="ECO:0000312" key="8">
    <source>
        <dbReference type="Proteomes" id="UP000219799"/>
    </source>
</evidence>
<evidence type="ECO:0000312" key="9">
    <source>
        <dbReference type="Proteomes" id="UP000219813"/>
    </source>
</evidence>
<keyword id="KW-1003">Cell membrane</keyword>
<keyword id="KW-0472">Membrane</keyword>
<keyword id="KW-1185">Reference proteome</keyword>
<keyword id="KW-0812">Transmembrane</keyword>
<keyword id="KW-1133">Transmembrane helix</keyword>
<keyword id="KW-0813">Transport</keyword>
<keyword id="KW-0926">Vacuole</keyword>
<sequence length="314" mass="34710">MQKSTSKYVIDPISIKTNCSSEESYIRCVEYGKGKAHYRNLILLAKAILAGVFVGVCAHASGIAGGLFYYHKLREYVGISMSAFVYGFTFPIAFLCIICTGSDLFTGNTLAVTTALLQKKLGLLCYMRVMCISLVGNYIGAVAFAFFVSYGSGAFSINTDTSKNHIFQFLNDIAIKKVSHSFIECICLAIGCNIFVCLAVYFVLSIKDGSGLVFSVFFAVYAFAIAGYEHIIANIYTLNLALMISNDISFTQVYFKNLLPTLIGNYIAGGLVLAFPLFFIYRSCYYDYDKMNDELNTVVLKTLSLELQNESNHI</sequence>
<feature type="chain" id="PRO_0000461319" description="Formate-nitrite transporter">
    <location>
        <begin position="1"/>
        <end position="314"/>
    </location>
</feature>
<feature type="topological domain" description="Cytoplasmic" evidence="5">
    <location>
        <begin position="1"/>
        <end position="47"/>
    </location>
</feature>
<feature type="transmembrane region" description="Helical" evidence="2">
    <location>
        <begin position="48"/>
        <end position="68"/>
    </location>
</feature>
<feature type="topological domain" description="Extracellular" evidence="5">
    <location>
        <begin position="69"/>
        <end position="77"/>
    </location>
</feature>
<feature type="transmembrane region" description="Helical" evidence="2">
    <location>
        <begin position="78"/>
        <end position="98"/>
    </location>
</feature>
<feature type="topological domain" description="Cytoplasmic" evidence="5">
    <location>
        <begin position="99"/>
        <end position="128"/>
    </location>
</feature>
<feature type="transmembrane region" description="Helical" evidence="2">
    <location>
        <begin position="129"/>
        <end position="149"/>
    </location>
</feature>
<feature type="topological domain" description="Extracellular" evidence="5">
    <location>
        <begin position="150"/>
        <end position="185"/>
    </location>
</feature>
<feature type="transmembrane region" description="Helical" evidence="2">
    <location>
        <begin position="186"/>
        <end position="206"/>
    </location>
</feature>
<feature type="topological domain" description="Cytoplasmic" evidence="5">
    <location>
        <begin position="207"/>
        <end position="211"/>
    </location>
</feature>
<feature type="transmembrane region" description="Helical" evidence="2">
    <location>
        <begin position="212"/>
        <end position="232"/>
    </location>
</feature>
<feature type="topological domain" description="Extracellular" evidence="5">
    <location>
        <begin position="233"/>
        <end position="260"/>
    </location>
</feature>
<feature type="transmembrane region" description="Helical" evidence="2">
    <location>
        <begin position="261"/>
        <end position="281"/>
    </location>
</feature>
<feature type="topological domain" description="Cytoplasmic" evidence="5">
    <location>
        <begin position="282"/>
        <end position="314"/>
    </location>
</feature>
<accession>A0A1C3KYI2</accession>
<accession>A0A1D3PB05</accession>
<gene>
    <name evidence="6" type="primary">FNT</name>
    <name evidence="6" type="ORF">PMLGA01_080027300</name>
    <name evidence="7" type="ORF">PMUG01_08039500</name>
</gene>
<comment type="function">
    <text evidence="1 3">Monocarboxylate-proton symporter that mediates the efflux of the waste product lactate in the intraerythrocytic parasites; active in acidic-to-neutral pH range (By similarity). Transports L-lactate (PubMed:33336890).</text>
</comment>
<comment type="catalytic activity">
    <reaction evidence="3">
        <text>(S)-lactate(in) + H(+)(in) = (S)-lactate(out) + H(+)(out)</text>
        <dbReference type="Rhea" id="RHEA:29415"/>
        <dbReference type="ChEBI" id="CHEBI:15378"/>
        <dbReference type="ChEBI" id="CHEBI:16651"/>
    </reaction>
</comment>
<comment type="catalytic activity">
    <reaction evidence="1">
        <text>formate(in) + H(+)(in) = formate(out) + H(+)(out)</text>
        <dbReference type="Rhea" id="RHEA:80887"/>
        <dbReference type="ChEBI" id="CHEBI:15378"/>
        <dbReference type="ChEBI" id="CHEBI:15740"/>
    </reaction>
</comment>
<comment type="catalytic activity">
    <reaction evidence="1">
        <text>pyruvate(out) + H(+)(out) = pyruvate(in) + H(+)(in)</text>
        <dbReference type="Rhea" id="RHEA:64720"/>
        <dbReference type="ChEBI" id="CHEBI:15361"/>
        <dbReference type="ChEBI" id="CHEBI:15378"/>
    </reaction>
</comment>
<comment type="catalytic activity">
    <reaction evidence="1">
        <text>acetate(out) + H(+)(out) = acetate(in) + H(+)(in)</text>
        <dbReference type="Rhea" id="RHEA:71803"/>
        <dbReference type="ChEBI" id="CHEBI:15378"/>
        <dbReference type="ChEBI" id="CHEBI:30089"/>
    </reaction>
</comment>
<comment type="activity regulation">
    <text evidence="3">Inhibited by the Malaria Box compound MMV007839 and its derivatives BH296 and BH267.meta.</text>
</comment>
<comment type="subunit">
    <text evidence="1">Homopentamer.</text>
</comment>
<comment type="subcellular location">
    <subcellularLocation>
        <location evidence="1">Cell membrane</location>
        <topology evidence="2">Multi-pass membrane protein</topology>
    </subcellularLocation>
    <subcellularLocation>
        <location evidence="1">Vacuole membrane</location>
        <topology evidence="2">Multi-pass membrane protein</topology>
    </subcellularLocation>
</comment>
<comment type="similarity">
    <text evidence="5">Belongs to the FNT transporter (TC 1.A.16) family.</text>
</comment>